<proteinExistence type="inferred from homology"/>
<name>Y2306_MYCTU</name>
<reference key="1">
    <citation type="journal article" date="1998" name="Nature">
        <title>Deciphering the biology of Mycobacterium tuberculosis from the complete genome sequence.</title>
        <authorList>
            <person name="Cole S.T."/>
            <person name="Brosch R."/>
            <person name="Parkhill J."/>
            <person name="Garnier T."/>
            <person name="Churcher C.M."/>
            <person name="Harris D.E."/>
            <person name="Gordon S.V."/>
            <person name="Eiglmeier K."/>
            <person name="Gas S."/>
            <person name="Barry C.E. III"/>
            <person name="Tekaia F."/>
            <person name="Badcock K."/>
            <person name="Basham D."/>
            <person name="Brown D."/>
            <person name="Chillingworth T."/>
            <person name="Connor R."/>
            <person name="Davies R.M."/>
            <person name="Devlin K."/>
            <person name="Feltwell T."/>
            <person name="Gentles S."/>
            <person name="Hamlin N."/>
            <person name="Holroyd S."/>
            <person name="Hornsby T."/>
            <person name="Jagels K."/>
            <person name="Krogh A."/>
            <person name="McLean J."/>
            <person name="Moule S."/>
            <person name="Murphy L.D."/>
            <person name="Oliver S."/>
            <person name="Osborne J."/>
            <person name="Quail M.A."/>
            <person name="Rajandream M.A."/>
            <person name="Rogers J."/>
            <person name="Rutter S."/>
            <person name="Seeger K."/>
            <person name="Skelton S."/>
            <person name="Squares S."/>
            <person name="Squares R."/>
            <person name="Sulston J.E."/>
            <person name="Taylor K."/>
            <person name="Whitehead S."/>
            <person name="Barrell B.G."/>
        </authorList>
    </citation>
    <scope>NUCLEOTIDE SEQUENCE [LARGE SCALE GENOMIC DNA]</scope>
    <source>
        <strain>ATCC 25618 / H37Rv</strain>
    </source>
</reference>
<evidence type="ECO:0000255" key="1"/>
<evidence type="ECO:0000256" key="2">
    <source>
        <dbReference type="SAM" id="MobiDB-lite"/>
    </source>
</evidence>
<sequence>MTRVALLTTGRELSQAAPPARARTPLPVPTPRGERPDDGGHAPHRDRRVNQRRRQVGDRRAQRGVDEHPWRRPDERPNDHLPQRNSERPEGVRGQRIRDAGDEALTDHRPQSAPFDLCIEAMGAIDTQQRLGVIPACAPAEKAGRVTKVSSSGPNSTPLPAARIGPGTNNAPSAADTTTYARGAIGPVATTIALRTPSTWMTRATATR</sequence>
<accession>P9WLC9</accession>
<accession>Q50659</accession>
<feature type="signal peptide" evidence="1">
    <location>
        <begin position="1"/>
        <end position="16"/>
    </location>
</feature>
<feature type="chain" id="PRO_0000014133" description="Uncharacterized protein Rv2306c">
    <location>
        <begin position="17"/>
        <end position="208"/>
    </location>
</feature>
<feature type="region of interest" description="Disordered" evidence="2">
    <location>
        <begin position="1"/>
        <end position="95"/>
    </location>
</feature>
<feature type="region of interest" description="Disordered" evidence="2">
    <location>
        <begin position="145"/>
        <end position="176"/>
    </location>
</feature>
<feature type="compositionally biased region" description="Low complexity" evidence="2">
    <location>
        <begin position="16"/>
        <end position="25"/>
    </location>
</feature>
<feature type="compositionally biased region" description="Basic and acidic residues" evidence="2">
    <location>
        <begin position="32"/>
        <end position="43"/>
    </location>
</feature>
<feature type="compositionally biased region" description="Basic residues" evidence="2">
    <location>
        <begin position="44"/>
        <end position="54"/>
    </location>
</feature>
<feature type="compositionally biased region" description="Basic and acidic residues" evidence="2">
    <location>
        <begin position="55"/>
        <end position="95"/>
    </location>
</feature>
<feature type="compositionally biased region" description="Polar residues" evidence="2">
    <location>
        <begin position="148"/>
        <end position="158"/>
    </location>
</feature>
<feature type="compositionally biased region" description="Polar residues" evidence="2">
    <location>
        <begin position="167"/>
        <end position="176"/>
    </location>
</feature>
<keyword id="KW-1185">Reference proteome</keyword>
<keyword id="KW-0732">Signal</keyword>
<organism>
    <name type="scientific">Mycobacterium tuberculosis (strain ATCC 25618 / H37Rv)</name>
    <dbReference type="NCBI Taxonomy" id="83332"/>
    <lineage>
        <taxon>Bacteria</taxon>
        <taxon>Bacillati</taxon>
        <taxon>Actinomycetota</taxon>
        <taxon>Actinomycetes</taxon>
        <taxon>Mycobacteriales</taxon>
        <taxon>Mycobacteriaceae</taxon>
        <taxon>Mycobacterium</taxon>
        <taxon>Mycobacterium tuberculosis complex</taxon>
    </lineage>
</organism>
<protein>
    <recommendedName>
        <fullName>Uncharacterized protein Rv2306c</fullName>
    </recommendedName>
</protein>
<dbReference type="EMBL" id="AL123456">
    <property type="status" value="NOT_ANNOTATED_CDS"/>
    <property type="molecule type" value="Genomic_DNA"/>
</dbReference>
<dbReference type="PIR" id="F70734">
    <property type="entry name" value="F70734"/>
</dbReference>
<dbReference type="TubercuList" id="Rv2306c"/>
<dbReference type="InParanoid" id="P9WLC9"/>
<dbReference type="Proteomes" id="UP000001584">
    <property type="component" value="Chromosome"/>
</dbReference>
<dbReference type="GO" id="GO:0005886">
    <property type="term" value="C:plasma membrane"/>
    <property type="evidence" value="ECO:0007005"/>
    <property type="project" value="MTBBASE"/>
</dbReference>
<gene>
    <name type="ordered locus">Rv2306c</name>
    <name type="ORF">MTCY339.03</name>
</gene>